<reference key="1">
    <citation type="journal article" date="2003" name="Nature">
        <title>Unique physiological and pathogenic features of Leptospira interrogans revealed by whole-genome sequencing.</title>
        <authorList>
            <person name="Ren S.-X."/>
            <person name="Fu G."/>
            <person name="Jiang X.-G."/>
            <person name="Zeng R."/>
            <person name="Miao Y.-G."/>
            <person name="Xu H."/>
            <person name="Zhang Y.-X."/>
            <person name="Xiong H."/>
            <person name="Lu G."/>
            <person name="Lu L.-F."/>
            <person name="Jiang H.-Q."/>
            <person name="Jia J."/>
            <person name="Tu Y.-F."/>
            <person name="Jiang J.-X."/>
            <person name="Gu W.-Y."/>
            <person name="Zhang Y.-Q."/>
            <person name="Cai Z."/>
            <person name="Sheng H.-H."/>
            <person name="Yin H.-F."/>
            <person name="Zhang Y."/>
            <person name="Zhu G.-F."/>
            <person name="Wan M."/>
            <person name="Huang H.-L."/>
            <person name="Qian Z."/>
            <person name="Wang S.-Y."/>
            <person name="Ma W."/>
            <person name="Yao Z.-J."/>
            <person name="Shen Y."/>
            <person name="Qiang B.-Q."/>
            <person name="Xia Q.-C."/>
            <person name="Guo X.-K."/>
            <person name="Danchin A."/>
            <person name="Saint Girons I."/>
            <person name="Somerville R.L."/>
            <person name="Wen Y.-M."/>
            <person name="Shi M.-H."/>
            <person name="Chen Z."/>
            <person name="Xu J.-G."/>
            <person name="Zhao G.-P."/>
        </authorList>
    </citation>
    <scope>NUCLEOTIDE SEQUENCE [LARGE SCALE GENOMIC DNA]</scope>
    <source>
        <strain>56601</strain>
    </source>
</reference>
<accession>Q8CXS8</accession>
<comment type="function">
    <text evidence="1">Specifically methylates guanosine-37 in various tRNAs.</text>
</comment>
<comment type="catalytic activity">
    <reaction evidence="1">
        <text>guanosine(37) in tRNA + S-adenosyl-L-methionine = N(1)-methylguanosine(37) in tRNA + S-adenosyl-L-homocysteine + H(+)</text>
        <dbReference type="Rhea" id="RHEA:36899"/>
        <dbReference type="Rhea" id="RHEA-COMP:10145"/>
        <dbReference type="Rhea" id="RHEA-COMP:10147"/>
        <dbReference type="ChEBI" id="CHEBI:15378"/>
        <dbReference type="ChEBI" id="CHEBI:57856"/>
        <dbReference type="ChEBI" id="CHEBI:59789"/>
        <dbReference type="ChEBI" id="CHEBI:73542"/>
        <dbReference type="ChEBI" id="CHEBI:74269"/>
        <dbReference type="EC" id="2.1.1.228"/>
    </reaction>
</comment>
<comment type="subunit">
    <text evidence="1">Homodimer.</text>
</comment>
<comment type="subcellular location">
    <subcellularLocation>
        <location evidence="1">Cytoplasm</location>
    </subcellularLocation>
</comment>
<comment type="similarity">
    <text evidence="1">Belongs to the RNA methyltransferase TrmD family.</text>
</comment>
<evidence type="ECO:0000255" key="1">
    <source>
        <dbReference type="HAMAP-Rule" id="MF_00605"/>
    </source>
</evidence>
<organism>
    <name type="scientific">Leptospira interrogans serogroup Icterohaemorrhagiae serovar Lai (strain 56601)</name>
    <dbReference type="NCBI Taxonomy" id="189518"/>
    <lineage>
        <taxon>Bacteria</taxon>
        <taxon>Pseudomonadati</taxon>
        <taxon>Spirochaetota</taxon>
        <taxon>Spirochaetia</taxon>
        <taxon>Leptospirales</taxon>
        <taxon>Leptospiraceae</taxon>
        <taxon>Leptospira</taxon>
    </lineage>
</organism>
<gene>
    <name evidence="1" type="primary">trmD</name>
    <name type="ordered locus">LA_2388</name>
</gene>
<dbReference type="EC" id="2.1.1.228" evidence="1"/>
<dbReference type="EMBL" id="AE010300">
    <property type="protein sequence ID" value="AAN49587.1"/>
    <property type="molecule type" value="Genomic_DNA"/>
</dbReference>
<dbReference type="RefSeq" id="NP_712569.1">
    <property type="nucleotide sequence ID" value="NC_004342.2"/>
</dbReference>
<dbReference type="RefSeq" id="WP_000671159.1">
    <property type="nucleotide sequence ID" value="NC_004342.2"/>
</dbReference>
<dbReference type="SMR" id="Q8CXS8"/>
<dbReference type="FunCoup" id="Q8CXS8">
    <property type="interactions" value="435"/>
</dbReference>
<dbReference type="STRING" id="189518.LA_2388"/>
<dbReference type="PaxDb" id="189518-LA_2388"/>
<dbReference type="EnsemblBacteria" id="AAN49587">
    <property type="protein sequence ID" value="AAN49587"/>
    <property type="gene ID" value="LA_2388"/>
</dbReference>
<dbReference type="GeneID" id="61144857"/>
<dbReference type="KEGG" id="lil:LA_2388"/>
<dbReference type="PATRIC" id="fig|189518.3.peg.2369"/>
<dbReference type="HOGENOM" id="CLU_047363_0_1_12"/>
<dbReference type="InParanoid" id="Q8CXS8"/>
<dbReference type="OrthoDB" id="9807416at2"/>
<dbReference type="Proteomes" id="UP000001408">
    <property type="component" value="Chromosome I"/>
</dbReference>
<dbReference type="GO" id="GO:0005829">
    <property type="term" value="C:cytosol"/>
    <property type="evidence" value="ECO:0000318"/>
    <property type="project" value="GO_Central"/>
</dbReference>
<dbReference type="GO" id="GO:0052906">
    <property type="term" value="F:tRNA (guanine(37)-N1)-methyltransferase activity"/>
    <property type="evidence" value="ECO:0000318"/>
    <property type="project" value="GO_Central"/>
</dbReference>
<dbReference type="GO" id="GO:0002939">
    <property type="term" value="P:tRNA N1-guanine methylation"/>
    <property type="evidence" value="ECO:0000318"/>
    <property type="project" value="GO_Central"/>
</dbReference>
<dbReference type="CDD" id="cd18080">
    <property type="entry name" value="TrmD-like"/>
    <property type="match status" value="1"/>
</dbReference>
<dbReference type="Gene3D" id="3.40.1280.10">
    <property type="match status" value="1"/>
</dbReference>
<dbReference type="Gene3D" id="1.10.1270.20">
    <property type="entry name" value="tRNA(m1g37)methyltransferase, domain 2"/>
    <property type="match status" value="1"/>
</dbReference>
<dbReference type="HAMAP" id="MF_00605">
    <property type="entry name" value="TrmD"/>
    <property type="match status" value="1"/>
</dbReference>
<dbReference type="InterPro" id="IPR029028">
    <property type="entry name" value="Alpha/beta_knot_MTases"/>
</dbReference>
<dbReference type="InterPro" id="IPR023148">
    <property type="entry name" value="tRNA_m1G_MeTrfase_C_sf"/>
</dbReference>
<dbReference type="InterPro" id="IPR002649">
    <property type="entry name" value="tRNA_m1G_MeTrfase_TrmD"/>
</dbReference>
<dbReference type="InterPro" id="IPR029026">
    <property type="entry name" value="tRNA_m1G_MTases_N"/>
</dbReference>
<dbReference type="InterPro" id="IPR016009">
    <property type="entry name" value="tRNA_MeTrfase_TRMD/TRM10"/>
</dbReference>
<dbReference type="NCBIfam" id="NF000648">
    <property type="entry name" value="PRK00026.1"/>
    <property type="match status" value="1"/>
</dbReference>
<dbReference type="NCBIfam" id="TIGR00088">
    <property type="entry name" value="trmD"/>
    <property type="match status" value="1"/>
</dbReference>
<dbReference type="PANTHER" id="PTHR46417">
    <property type="entry name" value="TRNA (GUANINE-N(1)-)-METHYLTRANSFERASE"/>
    <property type="match status" value="1"/>
</dbReference>
<dbReference type="PANTHER" id="PTHR46417:SF1">
    <property type="entry name" value="TRNA (GUANINE-N(1)-)-METHYLTRANSFERASE"/>
    <property type="match status" value="1"/>
</dbReference>
<dbReference type="Pfam" id="PF01746">
    <property type="entry name" value="tRNA_m1G_MT"/>
    <property type="match status" value="1"/>
</dbReference>
<dbReference type="PIRSF" id="PIRSF000386">
    <property type="entry name" value="tRNA_mtase"/>
    <property type="match status" value="1"/>
</dbReference>
<dbReference type="SUPFAM" id="SSF75217">
    <property type="entry name" value="alpha/beta knot"/>
    <property type="match status" value="1"/>
</dbReference>
<feature type="chain" id="PRO_0000060399" description="tRNA (guanine-N(1)-)-methyltransferase">
    <location>
        <begin position="1"/>
        <end position="231"/>
    </location>
</feature>
<feature type="binding site" evidence="1">
    <location>
        <position position="111"/>
    </location>
    <ligand>
        <name>S-adenosyl-L-methionine</name>
        <dbReference type="ChEBI" id="CHEBI:59789"/>
    </ligand>
</feature>
<feature type="binding site" evidence="1">
    <location>
        <begin position="131"/>
        <end position="136"/>
    </location>
    <ligand>
        <name>S-adenosyl-L-methionine</name>
        <dbReference type="ChEBI" id="CHEBI:59789"/>
    </ligand>
</feature>
<sequence>MKFNFITLFPDKIQSYFSEGLQQKAIESGVFSVNIIQLRNFSGNKHNRVDDTIYGGGPGMLLRVEPIHKAILSLGEEKGIVILTSPSGIPFNQSIAMDLKKGGKPLTFISGYYEGVDHRVTEHLVDMEMSLGNYVLSAGDLASICIADAVSRLLPGFLGADESLLDESHNHPDILEYPQFTKPSEYNGWKVPDVLLSGNHASILAWREQNRKKIERGNYESTFKRSADSGC</sequence>
<protein>
    <recommendedName>
        <fullName evidence="1">tRNA (guanine-N(1)-)-methyltransferase</fullName>
        <ecNumber evidence="1">2.1.1.228</ecNumber>
    </recommendedName>
    <alternativeName>
        <fullName evidence="1">M1G-methyltransferase</fullName>
    </alternativeName>
    <alternativeName>
        <fullName evidence="1">tRNA [GM37] methyltransferase</fullName>
    </alternativeName>
</protein>
<keyword id="KW-0963">Cytoplasm</keyword>
<keyword id="KW-0489">Methyltransferase</keyword>
<keyword id="KW-1185">Reference proteome</keyword>
<keyword id="KW-0949">S-adenosyl-L-methionine</keyword>
<keyword id="KW-0808">Transferase</keyword>
<keyword id="KW-0819">tRNA processing</keyword>
<proteinExistence type="inferred from homology"/>
<name>TRMD_LEPIN</name>